<proteinExistence type="inferred from homology"/>
<comment type="function">
    <text evidence="1">Hydrolyzes cytidine or uridine to ribose and cytosine or uracil, respectively. Has a clear preference for cytidine over uridine. Strictly specific for ribonucleosides.</text>
</comment>
<comment type="catalytic activity">
    <reaction evidence="1">
        <text>a pyrimidine ribonucleoside + H2O = a pyrimidine nucleobase + D-ribose</text>
        <dbReference type="Rhea" id="RHEA:56816"/>
        <dbReference type="ChEBI" id="CHEBI:15377"/>
        <dbReference type="ChEBI" id="CHEBI:26432"/>
        <dbReference type="ChEBI" id="CHEBI:47013"/>
        <dbReference type="ChEBI" id="CHEBI:141014"/>
        <dbReference type="EC" id="3.2.2.8"/>
    </reaction>
</comment>
<comment type="cofactor">
    <cofactor evidence="1">
        <name>Ca(2+)</name>
        <dbReference type="ChEBI" id="CHEBI:29108"/>
    </cofactor>
    <text evidence="1">Binds 1 Ca(2+) ion per monomer.</text>
</comment>
<comment type="subunit">
    <text evidence="1">Homotetramer.</text>
</comment>
<comment type="similarity">
    <text evidence="1">Belongs to the IUNH family. RihB subfamily.</text>
</comment>
<evidence type="ECO:0000255" key="1">
    <source>
        <dbReference type="HAMAP-Rule" id="MF_01433"/>
    </source>
</evidence>
<reference key="1">
    <citation type="journal article" date="2011" name="Proc. Natl. Acad. Sci. U.S.A.">
        <title>Genomic anatomy of Escherichia coli O157:H7 outbreaks.</title>
        <authorList>
            <person name="Eppinger M."/>
            <person name="Mammel M.K."/>
            <person name="Leclerc J.E."/>
            <person name="Ravel J."/>
            <person name="Cebula T.A."/>
        </authorList>
    </citation>
    <scope>NUCLEOTIDE SEQUENCE [LARGE SCALE GENOMIC DNA]</scope>
    <source>
        <strain>EC4115 / EHEC</strain>
    </source>
</reference>
<feature type="chain" id="PRO_1000145828" description="Pyrimidine-specific ribonucleoside hydrolase RihB">
    <location>
        <begin position="1"/>
        <end position="313"/>
    </location>
</feature>
<feature type="active site" description="Proton acceptor" evidence="1">
    <location>
        <position position="11"/>
    </location>
</feature>
<feature type="binding site" evidence="1">
    <location>
        <position position="11"/>
    </location>
    <ligand>
        <name>Ca(2+)</name>
        <dbReference type="ChEBI" id="CHEBI:29108"/>
    </ligand>
</feature>
<feature type="binding site" evidence="1">
    <location>
        <position position="16"/>
    </location>
    <ligand>
        <name>Ca(2+)</name>
        <dbReference type="ChEBI" id="CHEBI:29108"/>
    </ligand>
</feature>
<feature type="binding site" evidence="1">
    <location>
        <position position="124"/>
    </location>
    <ligand>
        <name>Ca(2+)</name>
        <dbReference type="ChEBI" id="CHEBI:29108"/>
    </ligand>
</feature>
<feature type="binding site" evidence="1">
    <location>
        <position position="227"/>
    </location>
    <ligand>
        <name>substrate</name>
    </ligand>
</feature>
<feature type="binding site" evidence="1">
    <location>
        <position position="239"/>
    </location>
    <ligand>
        <name>substrate</name>
    </ligand>
</feature>
<feature type="binding site" evidence="1">
    <location>
        <position position="240"/>
    </location>
    <ligand>
        <name>Ca(2+)</name>
        <dbReference type="ChEBI" id="CHEBI:29108"/>
    </ligand>
</feature>
<accession>B5YWV3</accession>
<gene>
    <name evidence="1" type="primary">rihB</name>
    <name type="ordered locus">ECH74115_3298</name>
</gene>
<sequence length="313" mass="33720">MEKRKIILDCDPGHDDAIAIMMAAKHPAIDLLGITIVAGNQTLDKTLINGLNVCQKLEINVPVYAGMPQPIMRQQIVADNIHGDTGLDGPVFEPLTRQAESTHAVKYIIDTLMASDGDITLVPVGPLSNIAVAMRMQPAILPKIREIVLMGGAYGTGNFTPSAEFNIFADPEAARVVFTSGVPLVMMGLDLTNQTVCTPDVIARMERAGGPAGELFSDIMNFTLKTQFENYGLAGGPVHDATCIGYLINPDGIKTQEMYVEVDVNSGPCYGRTVCDELGVLGKPANTKVGITIDSDWFWGLVEECVRGYIKTH</sequence>
<organism>
    <name type="scientific">Escherichia coli O157:H7 (strain EC4115 / EHEC)</name>
    <dbReference type="NCBI Taxonomy" id="444450"/>
    <lineage>
        <taxon>Bacteria</taxon>
        <taxon>Pseudomonadati</taxon>
        <taxon>Pseudomonadota</taxon>
        <taxon>Gammaproteobacteria</taxon>
        <taxon>Enterobacterales</taxon>
        <taxon>Enterobacteriaceae</taxon>
        <taxon>Escherichia</taxon>
    </lineage>
</organism>
<dbReference type="EC" id="3.2.2.8" evidence="1"/>
<dbReference type="EMBL" id="CP001164">
    <property type="protein sequence ID" value="ACI35147.1"/>
    <property type="molecule type" value="Genomic_DNA"/>
</dbReference>
<dbReference type="RefSeq" id="WP_000415416.1">
    <property type="nucleotide sequence ID" value="NC_011353.1"/>
</dbReference>
<dbReference type="SMR" id="B5YWV3"/>
<dbReference type="KEGG" id="ecf:ECH74115_3298"/>
<dbReference type="HOGENOM" id="CLU_036838_2_0_6"/>
<dbReference type="GO" id="GO:0005829">
    <property type="term" value="C:cytosol"/>
    <property type="evidence" value="ECO:0007669"/>
    <property type="project" value="TreeGrafter"/>
</dbReference>
<dbReference type="GO" id="GO:0005509">
    <property type="term" value="F:calcium ion binding"/>
    <property type="evidence" value="ECO:0007669"/>
    <property type="project" value="UniProtKB-UniRule"/>
</dbReference>
<dbReference type="GO" id="GO:0008477">
    <property type="term" value="F:purine nucleosidase activity"/>
    <property type="evidence" value="ECO:0007669"/>
    <property type="project" value="TreeGrafter"/>
</dbReference>
<dbReference type="GO" id="GO:0045437">
    <property type="term" value="F:uridine nucleosidase activity"/>
    <property type="evidence" value="ECO:0007669"/>
    <property type="project" value="UniProtKB-ARBA"/>
</dbReference>
<dbReference type="GO" id="GO:0006152">
    <property type="term" value="P:purine nucleoside catabolic process"/>
    <property type="evidence" value="ECO:0007669"/>
    <property type="project" value="TreeGrafter"/>
</dbReference>
<dbReference type="GO" id="GO:0006206">
    <property type="term" value="P:pyrimidine nucleobase metabolic process"/>
    <property type="evidence" value="ECO:0007669"/>
    <property type="project" value="UniProtKB-UniRule"/>
</dbReference>
<dbReference type="GO" id="GO:0046133">
    <property type="term" value="P:pyrimidine ribonucleoside catabolic process"/>
    <property type="evidence" value="ECO:0007669"/>
    <property type="project" value="InterPro"/>
</dbReference>
<dbReference type="CDD" id="cd02651">
    <property type="entry name" value="nuc_hydro_IU_UC_XIUA"/>
    <property type="match status" value="1"/>
</dbReference>
<dbReference type="FunFam" id="3.90.245.10:FF:000003">
    <property type="entry name" value="Pyrimidine-specific ribonucleoside hydrolase RihB"/>
    <property type="match status" value="1"/>
</dbReference>
<dbReference type="Gene3D" id="3.90.245.10">
    <property type="entry name" value="Ribonucleoside hydrolase-like"/>
    <property type="match status" value="1"/>
</dbReference>
<dbReference type="HAMAP" id="MF_01433">
    <property type="entry name" value="Pyrim_hydro_RihB"/>
    <property type="match status" value="1"/>
</dbReference>
<dbReference type="InterPro" id="IPR015910">
    <property type="entry name" value="I/U_nuclsd_hydro_CS"/>
</dbReference>
<dbReference type="InterPro" id="IPR001910">
    <property type="entry name" value="Inosine/uridine_hydrolase_dom"/>
</dbReference>
<dbReference type="InterPro" id="IPR023186">
    <property type="entry name" value="IUNH"/>
</dbReference>
<dbReference type="InterPro" id="IPR022977">
    <property type="entry name" value="Pyrim_hydro_RihB"/>
</dbReference>
<dbReference type="InterPro" id="IPR036452">
    <property type="entry name" value="Ribo_hydro-like"/>
</dbReference>
<dbReference type="NCBIfam" id="NF007417">
    <property type="entry name" value="PRK09955.1"/>
    <property type="match status" value="1"/>
</dbReference>
<dbReference type="PANTHER" id="PTHR12304">
    <property type="entry name" value="INOSINE-URIDINE PREFERRING NUCLEOSIDE HYDROLASE"/>
    <property type="match status" value="1"/>
</dbReference>
<dbReference type="PANTHER" id="PTHR12304:SF4">
    <property type="entry name" value="URIDINE NUCLEOSIDASE"/>
    <property type="match status" value="1"/>
</dbReference>
<dbReference type="Pfam" id="PF01156">
    <property type="entry name" value="IU_nuc_hydro"/>
    <property type="match status" value="1"/>
</dbReference>
<dbReference type="SUPFAM" id="SSF53590">
    <property type="entry name" value="Nucleoside hydrolase"/>
    <property type="match status" value="1"/>
</dbReference>
<dbReference type="PROSITE" id="PS01247">
    <property type="entry name" value="IUNH"/>
    <property type="match status" value="1"/>
</dbReference>
<name>RIHB_ECO5E</name>
<protein>
    <recommendedName>
        <fullName evidence="1">Pyrimidine-specific ribonucleoside hydrolase RihB</fullName>
        <ecNumber evidence="1">3.2.2.8</ecNumber>
    </recommendedName>
    <alternativeName>
        <fullName evidence="1">Cytidine/uridine-specific hydrolase</fullName>
    </alternativeName>
</protein>
<keyword id="KW-0106">Calcium</keyword>
<keyword id="KW-0326">Glycosidase</keyword>
<keyword id="KW-0378">Hydrolase</keyword>
<keyword id="KW-0479">Metal-binding</keyword>